<reference key="1">
    <citation type="journal article" date="2006" name="Theor. Appl. Genet.">
        <title>Complete chloroplast genome sequences of Solanum bulbocastanum, Solanum lycopersicum and comparative analyses with other Solanaceae genomes.</title>
        <authorList>
            <person name="Daniell H."/>
            <person name="Lee S.-B."/>
            <person name="Grevich J."/>
            <person name="Saski C."/>
            <person name="Quesada-Vargas T."/>
            <person name="Guda C."/>
            <person name="Tomkins J."/>
            <person name="Jansen R.K."/>
        </authorList>
    </citation>
    <scope>NUCLEOTIDE SEQUENCE [LARGE SCALE GENOMIC DNA]</scope>
    <source>
        <strain>cv. LA3023</strain>
    </source>
</reference>
<reference key="2">
    <citation type="journal article" date="2006" name="J. Mol. Evol.">
        <title>Sequence of the tomato chloroplast DNA and evolutionary comparison of solanaceous plastid genomes.</title>
        <authorList>
            <person name="Kahlau S."/>
            <person name="Aspinall S."/>
            <person name="Gray J.C."/>
            <person name="Bock R."/>
        </authorList>
    </citation>
    <scope>NUCLEOTIDE SEQUENCE [LARGE SCALE GENOMIC DNA]</scope>
    <source>
        <strain>cv. IPA-6</strain>
    </source>
</reference>
<name>RR18_SOLLC</name>
<geneLocation type="chloroplast"/>
<keyword id="KW-0150">Chloroplast</keyword>
<keyword id="KW-0934">Plastid</keyword>
<keyword id="KW-1185">Reference proteome</keyword>
<keyword id="KW-0687">Ribonucleoprotein</keyword>
<keyword id="KW-0689">Ribosomal protein</keyword>
<keyword id="KW-0694">RNA-binding</keyword>
<keyword id="KW-0699">rRNA-binding</keyword>
<feature type="chain" id="PRO_0000276888" description="Small ribosomal subunit protein bS18c">
    <location>
        <begin position="1"/>
        <end position="101"/>
    </location>
</feature>
<evidence type="ECO:0000255" key="1">
    <source>
        <dbReference type="HAMAP-Rule" id="MF_00270"/>
    </source>
</evidence>
<evidence type="ECO:0000305" key="2"/>
<protein>
    <recommendedName>
        <fullName evidence="1">Small ribosomal subunit protein bS18c</fullName>
    </recommendedName>
    <alternativeName>
        <fullName evidence="2">30S ribosomal protein S18, chloroplastic</fullName>
    </alternativeName>
</protein>
<dbReference type="EMBL" id="DQ347959">
    <property type="protein sequence ID" value="ABC56322.1"/>
    <property type="molecule type" value="Genomic_DNA"/>
</dbReference>
<dbReference type="EMBL" id="AM087200">
    <property type="protein sequence ID" value="CAJ32415.1"/>
    <property type="molecule type" value="Genomic_DNA"/>
</dbReference>
<dbReference type="RefSeq" id="AP_004950.1">
    <property type="nucleotide sequence ID" value="AC_000188.1"/>
</dbReference>
<dbReference type="RefSeq" id="YP_008563110.1">
    <property type="nucleotide sequence ID" value="NC_007898.3"/>
</dbReference>
<dbReference type="SMR" id="Q2MI78"/>
<dbReference type="FunCoup" id="Q2MI78">
    <property type="interactions" value="1057"/>
</dbReference>
<dbReference type="STRING" id="4081.Q2MI78"/>
<dbReference type="PaxDb" id="4081-Solyc01g007460.2.1"/>
<dbReference type="GeneID" id="3950409"/>
<dbReference type="KEGG" id="sly:3950409"/>
<dbReference type="eggNOG" id="KOG3162">
    <property type="taxonomic scope" value="Eukaryota"/>
</dbReference>
<dbReference type="HOGENOM" id="CLU_2296586_0_0_1"/>
<dbReference type="InParanoid" id="Q2MI78"/>
<dbReference type="OrthoDB" id="21463at2759"/>
<dbReference type="PhylomeDB" id="Q2MI78"/>
<dbReference type="Proteomes" id="UP000004994">
    <property type="component" value="Chloroplast"/>
</dbReference>
<dbReference type="ExpressionAtlas" id="Q2MI78">
    <property type="expression patterns" value="baseline"/>
</dbReference>
<dbReference type="GO" id="GO:0009507">
    <property type="term" value="C:chloroplast"/>
    <property type="evidence" value="ECO:0007669"/>
    <property type="project" value="UniProtKB-SubCell"/>
</dbReference>
<dbReference type="GO" id="GO:0005763">
    <property type="term" value="C:mitochondrial small ribosomal subunit"/>
    <property type="evidence" value="ECO:0000318"/>
    <property type="project" value="GO_Central"/>
</dbReference>
<dbReference type="GO" id="GO:0070181">
    <property type="term" value="F:small ribosomal subunit rRNA binding"/>
    <property type="evidence" value="ECO:0000318"/>
    <property type="project" value="GO_Central"/>
</dbReference>
<dbReference type="GO" id="GO:0003735">
    <property type="term" value="F:structural constituent of ribosome"/>
    <property type="evidence" value="ECO:0000318"/>
    <property type="project" value="GO_Central"/>
</dbReference>
<dbReference type="GO" id="GO:0006412">
    <property type="term" value="P:translation"/>
    <property type="evidence" value="ECO:0000318"/>
    <property type="project" value="GO_Central"/>
</dbReference>
<dbReference type="FunFam" id="4.10.640.10:FF:000002">
    <property type="entry name" value="30S ribosomal protein S18, chloroplastic"/>
    <property type="match status" value="1"/>
</dbReference>
<dbReference type="Gene3D" id="4.10.640.10">
    <property type="entry name" value="Ribosomal protein S18"/>
    <property type="match status" value="1"/>
</dbReference>
<dbReference type="HAMAP" id="MF_00270">
    <property type="entry name" value="Ribosomal_bS18"/>
    <property type="match status" value="1"/>
</dbReference>
<dbReference type="InterPro" id="IPR001648">
    <property type="entry name" value="Ribosomal_bS18"/>
</dbReference>
<dbReference type="InterPro" id="IPR018275">
    <property type="entry name" value="Ribosomal_bS18_CS"/>
</dbReference>
<dbReference type="InterPro" id="IPR036870">
    <property type="entry name" value="Ribosomal_bS18_sf"/>
</dbReference>
<dbReference type="NCBIfam" id="TIGR00165">
    <property type="entry name" value="S18"/>
    <property type="match status" value="1"/>
</dbReference>
<dbReference type="PANTHER" id="PTHR13479">
    <property type="entry name" value="30S RIBOSOMAL PROTEIN S18"/>
    <property type="match status" value="1"/>
</dbReference>
<dbReference type="PANTHER" id="PTHR13479:SF40">
    <property type="entry name" value="SMALL RIBOSOMAL SUBUNIT PROTEIN BS18M"/>
    <property type="match status" value="1"/>
</dbReference>
<dbReference type="Pfam" id="PF01084">
    <property type="entry name" value="Ribosomal_S18"/>
    <property type="match status" value="1"/>
</dbReference>
<dbReference type="PRINTS" id="PR00974">
    <property type="entry name" value="RIBOSOMALS18"/>
</dbReference>
<dbReference type="SUPFAM" id="SSF46911">
    <property type="entry name" value="Ribosomal protein S18"/>
    <property type="match status" value="1"/>
</dbReference>
<dbReference type="PROSITE" id="PS00057">
    <property type="entry name" value="RIBOSOMAL_S18"/>
    <property type="match status" value="1"/>
</dbReference>
<accession>Q2MI78</accession>
<sequence>MDKSKRPFLKFKRSFRRRLPPIQSGDRIDYRNMSLISRFISEQGKILSRRVNRLTLKQQRLITLAIKQARILSLLPFLNNEKQFERTESTARTTGFKARNK</sequence>
<gene>
    <name evidence="1" type="primary">rps18</name>
</gene>
<comment type="subunit">
    <text>Part of the 30S ribosomal subunit.</text>
</comment>
<comment type="subcellular location">
    <subcellularLocation>
        <location>Plastid</location>
        <location>Chloroplast</location>
    </subcellularLocation>
</comment>
<comment type="similarity">
    <text evidence="1">Belongs to the bacterial ribosomal protein bS18 family.</text>
</comment>
<proteinExistence type="inferred from homology"/>
<organism>
    <name type="scientific">Solanum lycopersicum</name>
    <name type="common">Tomato</name>
    <name type="synonym">Lycopersicon esculentum</name>
    <dbReference type="NCBI Taxonomy" id="4081"/>
    <lineage>
        <taxon>Eukaryota</taxon>
        <taxon>Viridiplantae</taxon>
        <taxon>Streptophyta</taxon>
        <taxon>Embryophyta</taxon>
        <taxon>Tracheophyta</taxon>
        <taxon>Spermatophyta</taxon>
        <taxon>Magnoliopsida</taxon>
        <taxon>eudicotyledons</taxon>
        <taxon>Gunneridae</taxon>
        <taxon>Pentapetalae</taxon>
        <taxon>asterids</taxon>
        <taxon>lamiids</taxon>
        <taxon>Solanales</taxon>
        <taxon>Solanaceae</taxon>
        <taxon>Solanoideae</taxon>
        <taxon>Solaneae</taxon>
        <taxon>Solanum</taxon>
        <taxon>Solanum subgen. Lycopersicon</taxon>
    </lineage>
</organism>